<reference key="1">
    <citation type="journal article" date="2005" name="Nature">
        <title>Genome sequencing and analysis of Aspergillus oryzae.</title>
        <authorList>
            <person name="Machida M."/>
            <person name="Asai K."/>
            <person name="Sano M."/>
            <person name="Tanaka T."/>
            <person name="Kumagai T."/>
            <person name="Terai G."/>
            <person name="Kusumoto K."/>
            <person name="Arima T."/>
            <person name="Akita O."/>
            <person name="Kashiwagi Y."/>
            <person name="Abe K."/>
            <person name="Gomi K."/>
            <person name="Horiuchi H."/>
            <person name="Kitamoto K."/>
            <person name="Kobayashi T."/>
            <person name="Takeuchi M."/>
            <person name="Denning D.W."/>
            <person name="Galagan J.E."/>
            <person name="Nierman W.C."/>
            <person name="Yu J."/>
            <person name="Archer D.B."/>
            <person name="Bennett J.W."/>
            <person name="Bhatnagar D."/>
            <person name="Cleveland T.E."/>
            <person name="Fedorova N.D."/>
            <person name="Gotoh O."/>
            <person name="Horikawa H."/>
            <person name="Hosoyama A."/>
            <person name="Ichinomiya M."/>
            <person name="Igarashi R."/>
            <person name="Iwashita K."/>
            <person name="Juvvadi P.R."/>
            <person name="Kato M."/>
            <person name="Kato Y."/>
            <person name="Kin T."/>
            <person name="Kokubun A."/>
            <person name="Maeda H."/>
            <person name="Maeyama N."/>
            <person name="Maruyama J."/>
            <person name="Nagasaki H."/>
            <person name="Nakajima T."/>
            <person name="Oda K."/>
            <person name="Okada K."/>
            <person name="Paulsen I."/>
            <person name="Sakamoto K."/>
            <person name="Sawano T."/>
            <person name="Takahashi M."/>
            <person name="Takase K."/>
            <person name="Terabayashi Y."/>
            <person name="Wortman J.R."/>
            <person name="Yamada O."/>
            <person name="Yamagata Y."/>
            <person name="Anazawa H."/>
            <person name="Hata Y."/>
            <person name="Koide Y."/>
            <person name="Komori T."/>
            <person name="Koyama Y."/>
            <person name="Minetoki T."/>
            <person name="Suharnan S."/>
            <person name="Tanaka A."/>
            <person name="Isono K."/>
            <person name="Kuhara S."/>
            <person name="Ogasawara N."/>
            <person name="Kikuchi H."/>
        </authorList>
    </citation>
    <scope>NUCLEOTIDE SEQUENCE [LARGE SCALE GENOMIC DNA]</scope>
    <source>
        <strain>ATCC 42149 / RIB 40</strain>
    </source>
</reference>
<evidence type="ECO:0000250" key="1"/>
<evidence type="ECO:0000250" key="2">
    <source>
        <dbReference type="UniProtKB" id="Q9ALJ4"/>
    </source>
</evidence>
<evidence type="ECO:0000255" key="3"/>
<evidence type="ECO:0000305" key="4"/>
<keyword id="KW-0119">Carbohydrate metabolism</keyword>
<keyword id="KW-0325">Glycoprotein</keyword>
<keyword id="KW-0326">Glycosidase</keyword>
<keyword id="KW-0378">Hydrolase</keyword>
<keyword id="KW-0460">Magnesium</keyword>
<keyword id="KW-0520">NAD</keyword>
<keyword id="KW-0624">Polysaccharide degradation</keyword>
<keyword id="KW-1185">Reference proteome</keyword>
<keyword id="KW-0964">Secreted</keyword>
<keyword id="KW-0732">Signal</keyword>
<gene>
    <name type="primary">aglC</name>
    <name type="ORF">AO090010000684</name>
</gene>
<feature type="signal peptide" evidence="3">
    <location>
        <begin position="1"/>
        <end position="27"/>
    </location>
</feature>
<feature type="chain" id="PRO_0000395065" description="Probable alpha-galactosidase C">
    <location>
        <begin position="28"/>
        <end position="751"/>
    </location>
</feature>
<feature type="active site" description="Nucleophile" evidence="2">
    <location>
        <position position="510"/>
    </location>
</feature>
<feature type="active site" description="Proton donor" evidence="2">
    <location>
        <position position="572"/>
    </location>
</feature>
<feature type="glycosylation site" description="N-linked (GlcNAc...) asparagine" evidence="3">
    <location>
        <position position="49"/>
    </location>
</feature>
<feature type="glycosylation site" description="N-linked (GlcNAc...) asparagine" evidence="3">
    <location>
        <position position="57"/>
    </location>
</feature>
<feature type="glycosylation site" description="N-linked (GlcNAc...) asparagine" evidence="3">
    <location>
        <position position="162"/>
    </location>
</feature>
<feature type="glycosylation site" description="N-linked (GlcNAc...) asparagine" evidence="3">
    <location>
        <position position="186"/>
    </location>
</feature>
<feature type="glycosylation site" description="N-linked (GlcNAc...) asparagine" evidence="3">
    <location>
        <position position="194"/>
    </location>
</feature>
<feature type="glycosylation site" description="N-linked (GlcNAc...) asparagine" evidence="3">
    <location>
        <position position="366"/>
    </location>
</feature>
<feature type="glycosylation site" description="N-linked (GlcNAc...) asparagine" evidence="3">
    <location>
        <position position="433"/>
    </location>
</feature>
<feature type="glycosylation site" description="N-linked (GlcNAc...) asparagine" evidence="3">
    <location>
        <position position="452"/>
    </location>
</feature>
<feature type="glycosylation site" description="N-linked (GlcNAc...) asparagine" evidence="3">
    <location>
        <position position="500"/>
    </location>
</feature>
<feature type="glycosylation site" description="N-linked (GlcNAc...) asparagine" evidence="3">
    <location>
        <position position="720"/>
    </location>
</feature>
<dbReference type="EC" id="3.2.1.22"/>
<dbReference type="EMBL" id="BA000056">
    <property type="protein sequence ID" value="BAE66504.1"/>
    <property type="molecule type" value="Genomic_DNA"/>
</dbReference>
<dbReference type="SMR" id="Q2TW69"/>
<dbReference type="STRING" id="510516.Q2TW69"/>
<dbReference type="CAZy" id="GH36">
    <property type="family name" value="Glycoside Hydrolase Family 36"/>
</dbReference>
<dbReference type="GlyCosmos" id="Q2TW69">
    <property type="glycosylation" value="10 sites, No reported glycans"/>
</dbReference>
<dbReference type="EnsemblFungi" id="BAE66504">
    <property type="protein sequence ID" value="BAE66504"/>
    <property type="gene ID" value="AO090010000684"/>
</dbReference>
<dbReference type="VEuPathDB" id="FungiDB:AO090010000684"/>
<dbReference type="HOGENOM" id="CLU_009640_2_1_1"/>
<dbReference type="OMA" id="MSQQFHR"/>
<dbReference type="Proteomes" id="UP000006564">
    <property type="component" value="Chromosome 8"/>
</dbReference>
<dbReference type="GO" id="GO:0005576">
    <property type="term" value="C:extracellular region"/>
    <property type="evidence" value="ECO:0007669"/>
    <property type="project" value="UniProtKB-SubCell"/>
</dbReference>
<dbReference type="GO" id="GO:0004557">
    <property type="term" value="F:alpha-galactosidase activity"/>
    <property type="evidence" value="ECO:0007669"/>
    <property type="project" value="UniProtKB-EC"/>
</dbReference>
<dbReference type="GO" id="GO:0000272">
    <property type="term" value="P:polysaccharide catabolic process"/>
    <property type="evidence" value="ECO:0007669"/>
    <property type="project" value="UniProtKB-KW"/>
</dbReference>
<dbReference type="CDD" id="cd14791">
    <property type="entry name" value="GH36"/>
    <property type="match status" value="1"/>
</dbReference>
<dbReference type="FunFam" id="2.60.40.1180:FF:000028">
    <property type="entry name" value="Alpha-galactosidase"/>
    <property type="match status" value="1"/>
</dbReference>
<dbReference type="FunFam" id="3.20.20.70:FF:000118">
    <property type="entry name" value="Alpha-galactosidase"/>
    <property type="match status" value="1"/>
</dbReference>
<dbReference type="Gene3D" id="3.20.20.70">
    <property type="entry name" value="Aldolase class I"/>
    <property type="match status" value="1"/>
</dbReference>
<dbReference type="Gene3D" id="2.70.98.60">
    <property type="entry name" value="alpha-galactosidase from lactobacil brevis"/>
    <property type="match status" value="1"/>
</dbReference>
<dbReference type="Gene3D" id="2.60.40.1180">
    <property type="entry name" value="Golgi alpha-mannosidase II"/>
    <property type="match status" value="1"/>
</dbReference>
<dbReference type="InterPro" id="IPR013785">
    <property type="entry name" value="Aldolase_TIM"/>
</dbReference>
<dbReference type="InterPro" id="IPR038417">
    <property type="entry name" value="Alpga-gal_N_sf"/>
</dbReference>
<dbReference type="InterPro" id="IPR050985">
    <property type="entry name" value="Alpha-glycosidase_related"/>
</dbReference>
<dbReference type="InterPro" id="IPR000111">
    <property type="entry name" value="Glyco_hydro_27/36_CS"/>
</dbReference>
<dbReference type="InterPro" id="IPR002252">
    <property type="entry name" value="Glyco_hydro_36"/>
</dbReference>
<dbReference type="InterPro" id="IPR031705">
    <property type="entry name" value="Glyco_hydro_36_C"/>
</dbReference>
<dbReference type="InterPro" id="IPR031704">
    <property type="entry name" value="Glyco_hydro_36_N"/>
</dbReference>
<dbReference type="InterPro" id="IPR013780">
    <property type="entry name" value="Glyco_hydro_b"/>
</dbReference>
<dbReference type="InterPro" id="IPR017853">
    <property type="entry name" value="Glycoside_hydrolase_SF"/>
</dbReference>
<dbReference type="PANTHER" id="PTHR43053:SF3">
    <property type="entry name" value="ALPHA-GALACTOSIDASE C-RELATED"/>
    <property type="match status" value="1"/>
</dbReference>
<dbReference type="PANTHER" id="PTHR43053">
    <property type="entry name" value="GLYCOSIDASE FAMILY 31"/>
    <property type="match status" value="1"/>
</dbReference>
<dbReference type="Pfam" id="PF16874">
    <property type="entry name" value="Glyco_hydro_36C"/>
    <property type="match status" value="1"/>
</dbReference>
<dbReference type="Pfam" id="PF16875">
    <property type="entry name" value="Glyco_hydro_36N"/>
    <property type="match status" value="1"/>
</dbReference>
<dbReference type="Pfam" id="PF02065">
    <property type="entry name" value="Melibiase"/>
    <property type="match status" value="1"/>
</dbReference>
<dbReference type="PIRSF" id="PIRSF005536">
    <property type="entry name" value="Agal"/>
    <property type="match status" value="1"/>
</dbReference>
<dbReference type="PRINTS" id="PR00743">
    <property type="entry name" value="GLHYDRLASE36"/>
</dbReference>
<dbReference type="SUPFAM" id="SSF51445">
    <property type="entry name" value="(Trans)glycosidases"/>
    <property type="match status" value="1"/>
</dbReference>
<dbReference type="PROSITE" id="PS00512">
    <property type="entry name" value="ALPHA_GALACTOSIDASE"/>
    <property type="match status" value="1"/>
</dbReference>
<proteinExistence type="inferred from homology"/>
<organism>
    <name type="scientific">Aspergillus oryzae (strain ATCC 42149 / RIB 40)</name>
    <name type="common">Yellow koji mold</name>
    <dbReference type="NCBI Taxonomy" id="510516"/>
    <lineage>
        <taxon>Eukaryota</taxon>
        <taxon>Fungi</taxon>
        <taxon>Dikarya</taxon>
        <taxon>Ascomycota</taxon>
        <taxon>Pezizomycotina</taxon>
        <taxon>Eurotiomycetes</taxon>
        <taxon>Eurotiomycetidae</taxon>
        <taxon>Eurotiales</taxon>
        <taxon>Aspergillaceae</taxon>
        <taxon>Aspergillus</taxon>
        <taxon>Aspergillus subgen. Circumdati</taxon>
    </lineage>
</organism>
<sequence>MFGSPKRAALAAASLLAVFGNGPSVMAQETSSNNAVVADGKTFALNGENVSYRFRVNETTGDLVSDHFGGSITGNLFPGFGAEALGGWVGLAGRFRREFPDHGRGDFRIPAVRIRQEAGYTVTDLQYQSYSVIPGKPALPGLPSTFGSEEDVTTLVVHLYDNYSSIAVDLSYSIFPKYDAIVRSANVTNKGTQNITVEALSSFSFDFPYEDLEMISLRGDWAREAHRQRRKVEYGLQGFGSSTGFSSHLHNPFLAIVHPSTTESQGEAWGFNLVYTGSFSVDVEKGSQGLTRALLGFNPSQLSWQLGAGETLTSPECVSVYSSDGIGGMSRSFHRLYRNHLIKSKFATSDRPPLLNSWEGLYFDYNESTIYRLAEESAALGVKLFVMDDGWFGDKYPRVSDNAGLGDWVPNPDRFPDGLTPLVEDVTKLKAGNSSTDLRFGLWVEPEMANPNSTLYHEHPDWVLHAGQYPRTLQRNQLVLNLALPEVQDYIIDEITNILNSSAISYVKWDFNRAMHETPSPSNDHEYILGMYRVFDTLTTRFPDVLWEGCASGGGRFDPGVLEYFPQIWTSDNTDALMRITIQLGTSLAYPPSAMGAHLSAVPNAQTGRTIPVKFRGHVAMMGGSFGLELDPAELQEDEKAEVPGLIALAEKVNPIILTGDMWRLRLPEESNWPAVLFISEDGNQAVLFYFQLGPNVNHATPWLRLQGLDPKATYSVDGNGSYSGATLMNMGLQYKFESDYDSKVVFLQKQ</sequence>
<accession>Q2TW69</accession>
<name>AGALC_ASPOR</name>
<comment type="function">
    <text evidence="1">Hydrolyzes a variety of simple alpha-D-galactoside as well as more complex molecules such as oligosaccharides and polysaccharides.</text>
</comment>
<comment type="catalytic activity">
    <reaction>
        <text>Hydrolysis of terminal, non-reducing alpha-D-galactose residues in alpha-D-galactosides, including galactose oligosaccharides, galactomannans and galactolipids.</text>
        <dbReference type="EC" id="3.2.1.22"/>
    </reaction>
</comment>
<comment type="cofactor">
    <cofactor evidence="1">
        <name>Mg(2+)</name>
        <dbReference type="ChEBI" id="CHEBI:18420"/>
    </cofactor>
</comment>
<comment type="cofactor">
    <cofactor evidence="1">
        <name>NAD(+)</name>
        <dbReference type="ChEBI" id="CHEBI:57540"/>
    </cofactor>
</comment>
<comment type="subunit">
    <text evidence="1">Homotetramer.</text>
</comment>
<comment type="subcellular location">
    <subcellularLocation>
        <location evidence="1">Secreted</location>
    </subcellularLocation>
</comment>
<comment type="similarity">
    <text evidence="4">Belongs to the glycosyl hydrolase 36 family.</text>
</comment>
<protein>
    <recommendedName>
        <fullName>Probable alpha-galactosidase C</fullName>
        <ecNumber>3.2.1.22</ecNumber>
    </recommendedName>
    <alternativeName>
        <fullName>Melibiase C</fullName>
    </alternativeName>
</protein>